<protein>
    <recommendedName>
        <fullName evidence="1">Light-independent protochlorophyllide reductase subunit B</fullName>
        <shortName evidence="1">DPOR subunit B</shortName>
        <shortName evidence="1">LI-POR subunit B</shortName>
        <ecNumber evidence="1">1.3.7.7</ecNumber>
    </recommendedName>
</protein>
<name>BCHB_CHLPM</name>
<sequence>MRLAFWLYEGTALHGISRITNSMKGVHTVYHAPQGDDYITATYTMLERTPEFPALSISVVRGRDLAQGVSRLPATLQQVEHHYHPELTVIAPSCSTALLQEDLRQLAAHSGVAQEKLMVYAVNPFRVTENEAADGLFTELVKRYAANGQKSAVPAVNLLGFTSLGFHLKANLTSLRRMLSTLGVKVNVVAPWGAGIADLARLPEAWLNIAPYHEIGRTAAEYLEQEFAMPAVYDTPIGVEPTLRWLRSIIEKLNEVGAGCGASPISMPALHDFSLDGMSAPSGVPWFARTADMESFSNKKAFVFADATTTVAMVKFLRDELGMKVVGAGTYLERDADWVRRELEGYLPGELMVTDRFQDVAKVIEDELPDLVCGTQMERHSCRKLDIPCMVVSPPTHIENHLLGYYPFFGFDGADVIADRVYLSCKLGLEKHLIDFFGDAGLEYEDGDAADETGVAAAAANGHSPAGGSTEGEGGMVWTGEAETMLKKVPFFVRKKVRKNTETFAMEQGEGEVTVEVFRRAKDSLGG</sequence>
<reference key="1">
    <citation type="submission" date="2007-03" db="EMBL/GenBank/DDBJ databases">
        <title>Complete sequence of Prosthecochloris vibrioformis DSM 265.</title>
        <authorList>
            <consortium name="US DOE Joint Genome Institute"/>
            <person name="Copeland A."/>
            <person name="Lucas S."/>
            <person name="Lapidus A."/>
            <person name="Barry K."/>
            <person name="Detter J.C."/>
            <person name="Glavina del Rio T."/>
            <person name="Hammon N."/>
            <person name="Israni S."/>
            <person name="Pitluck S."/>
            <person name="Schmutz J."/>
            <person name="Larimer F."/>
            <person name="Land M."/>
            <person name="Hauser L."/>
            <person name="Mikhailova N."/>
            <person name="Li T."/>
            <person name="Overmann J."/>
            <person name="Schuster S.C."/>
            <person name="Bryant D.A."/>
            <person name="Richardson P."/>
        </authorList>
    </citation>
    <scope>NUCLEOTIDE SEQUENCE [LARGE SCALE GENOMIC DNA]</scope>
    <source>
        <strain>DSM 265 / 1930</strain>
    </source>
</reference>
<comment type="function">
    <text evidence="1">Component of the dark-operative protochlorophyllide reductase (DPOR) that uses Mg-ATP and reduced ferredoxin to reduce ring D of protochlorophyllide (Pchlide) to form chlorophyllide a (Chlide). This reaction is light-independent. The NB-protein (BchN-BchB) is the catalytic component of the complex.</text>
</comment>
<comment type="catalytic activity">
    <reaction evidence="1">
        <text>chlorophyllide a + oxidized 2[4Fe-4S]-[ferredoxin] + 2 ADP + 2 phosphate = protochlorophyllide a + reduced 2[4Fe-4S]-[ferredoxin] + 2 ATP + 2 H2O</text>
        <dbReference type="Rhea" id="RHEA:28202"/>
        <dbReference type="Rhea" id="RHEA-COMP:10002"/>
        <dbReference type="Rhea" id="RHEA-COMP:10004"/>
        <dbReference type="ChEBI" id="CHEBI:15377"/>
        <dbReference type="ChEBI" id="CHEBI:30616"/>
        <dbReference type="ChEBI" id="CHEBI:33722"/>
        <dbReference type="ChEBI" id="CHEBI:33723"/>
        <dbReference type="ChEBI" id="CHEBI:43474"/>
        <dbReference type="ChEBI" id="CHEBI:83348"/>
        <dbReference type="ChEBI" id="CHEBI:83350"/>
        <dbReference type="ChEBI" id="CHEBI:456216"/>
        <dbReference type="EC" id="1.3.7.7"/>
    </reaction>
</comment>
<comment type="cofactor">
    <cofactor evidence="1">
        <name>[4Fe-4S] cluster</name>
        <dbReference type="ChEBI" id="CHEBI:49883"/>
    </cofactor>
    <text evidence="1">Binds 1 [4Fe-4S] cluster per heterodimer. The cluster is bound at the heterodimer interface by residues from both subunits.</text>
</comment>
<comment type="pathway">
    <text evidence="1">Porphyrin-containing compound metabolism; bacteriochlorophyll biosynthesis (light-independent).</text>
</comment>
<comment type="subunit">
    <text evidence="1">Protochlorophyllide reductase is composed of three subunits; BchL, BchN and BchB. Forms a heterotetramer of two BchB and two BchN subunits.</text>
</comment>
<comment type="similarity">
    <text evidence="1">Belongs to the ChlB/BchB/BchZ family.</text>
</comment>
<feature type="chain" id="PRO_1000079377" description="Light-independent protochlorophyllide reductase subunit B">
    <location>
        <begin position="1"/>
        <end position="527"/>
    </location>
</feature>
<feature type="active site" description="Proton donor" evidence="1">
    <location>
        <position position="292"/>
    </location>
</feature>
<feature type="binding site" evidence="1">
    <location>
        <position position="36"/>
    </location>
    <ligand>
        <name>[4Fe-4S] cluster</name>
        <dbReference type="ChEBI" id="CHEBI:49883"/>
        <note>ligand shared with heterodimeric partner</note>
    </ligand>
</feature>
<feature type="binding site" evidence="1">
    <location>
        <begin position="428"/>
        <end position="429"/>
    </location>
    <ligand>
        <name>substrate</name>
    </ligand>
</feature>
<accession>A4SCU5</accession>
<evidence type="ECO:0000255" key="1">
    <source>
        <dbReference type="HAMAP-Rule" id="MF_00353"/>
    </source>
</evidence>
<keyword id="KW-0004">4Fe-4S</keyword>
<keyword id="KW-0067">ATP-binding</keyword>
<keyword id="KW-0077">Bacteriochlorophyll biosynthesis</keyword>
<keyword id="KW-0149">Chlorophyll biosynthesis</keyword>
<keyword id="KW-0408">Iron</keyword>
<keyword id="KW-0411">Iron-sulfur</keyword>
<keyword id="KW-0479">Metal-binding</keyword>
<keyword id="KW-0547">Nucleotide-binding</keyword>
<keyword id="KW-0560">Oxidoreductase</keyword>
<keyword id="KW-0602">Photosynthesis</keyword>
<organism>
    <name type="scientific">Chlorobium phaeovibrioides (strain DSM 265 / 1930)</name>
    <name type="common">Prosthecochloris vibrioformis (strain DSM 265)</name>
    <dbReference type="NCBI Taxonomy" id="290318"/>
    <lineage>
        <taxon>Bacteria</taxon>
        <taxon>Pseudomonadati</taxon>
        <taxon>Chlorobiota</taxon>
        <taxon>Chlorobiia</taxon>
        <taxon>Chlorobiales</taxon>
        <taxon>Chlorobiaceae</taxon>
        <taxon>Chlorobium/Pelodictyon group</taxon>
        <taxon>Chlorobium</taxon>
    </lineage>
</organism>
<dbReference type="EC" id="1.3.7.7" evidence="1"/>
<dbReference type="EMBL" id="CP000607">
    <property type="protein sequence ID" value="ABP36304.1"/>
    <property type="molecule type" value="Genomic_DNA"/>
</dbReference>
<dbReference type="SMR" id="A4SCU5"/>
<dbReference type="STRING" id="290318.Cvib_0282"/>
<dbReference type="KEGG" id="pvi:Cvib_0282"/>
<dbReference type="eggNOG" id="COG2710">
    <property type="taxonomic scope" value="Bacteria"/>
</dbReference>
<dbReference type="HOGENOM" id="CLU_025470_0_0_10"/>
<dbReference type="OrthoDB" id="5717231at2"/>
<dbReference type="UniPathway" id="UPA00671"/>
<dbReference type="GO" id="GO:0051539">
    <property type="term" value="F:4 iron, 4 sulfur cluster binding"/>
    <property type="evidence" value="ECO:0007669"/>
    <property type="project" value="UniProtKB-UniRule"/>
</dbReference>
<dbReference type="GO" id="GO:0005524">
    <property type="term" value="F:ATP binding"/>
    <property type="evidence" value="ECO:0007669"/>
    <property type="project" value="UniProtKB-UniRule"/>
</dbReference>
<dbReference type="GO" id="GO:0046872">
    <property type="term" value="F:metal ion binding"/>
    <property type="evidence" value="ECO:0007669"/>
    <property type="project" value="UniProtKB-KW"/>
</dbReference>
<dbReference type="GO" id="GO:0016730">
    <property type="term" value="F:oxidoreductase activity, acting on iron-sulfur proteins as donors"/>
    <property type="evidence" value="ECO:0007669"/>
    <property type="project" value="InterPro"/>
</dbReference>
<dbReference type="GO" id="GO:0016636">
    <property type="term" value="F:oxidoreductase activity, acting on the CH-CH group of donors, iron-sulfur protein as acceptor"/>
    <property type="evidence" value="ECO:0007669"/>
    <property type="project" value="UniProtKB-UniRule"/>
</dbReference>
<dbReference type="GO" id="GO:0036070">
    <property type="term" value="P:light-independent bacteriochlorophyll biosynthetic process"/>
    <property type="evidence" value="ECO:0007669"/>
    <property type="project" value="UniProtKB-UniRule"/>
</dbReference>
<dbReference type="GO" id="GO:0019685">
    <property type="term" value="P:photosynthesis, dark reaction"/>
    <property type="evidence" value="ECO:0007669"/>
    <property type="project" value="InterPro"/>
</dbReference>
<dbReference type="Gene3D" id="1.20.89.20">
    <property type="match status" value="1"/>
</dbReference>
<dbReference type="Gene3D" id="3.40.50.1980">
    <property type="entry name" value="Nitrogenase molybdenum iron protein domain"/>
    <property type="match status" value="3"/>
</dbReference>
<dbReference type="Gene3D" id="1.10.8.550">
    <property type="entry name" value="Proto-chlorophyllide reductase 57 kD subunit B"/>
    <property type="match status" value="1"/>
</dbReference>
<dbReference type="HAMAP" id="MF_00353">
    <property type="entry name" value="ChlB_BchB"/>
    <property type="match status" value="1"/>
</dbReference>
<dbReference type="InterPro" id="IPR050152">
    <property type="entry name" value="ChlB/BchB/BchZ"/>
</dbReference>
<dbReference type="InterPro" id="IPR013580">
    <property type="entry name" value="LI-POR_suB-like_C"/>
</dbReference>
<dbReference type="InterPro" id="IPR000510">
    <property type="entry name" value="Nase/OxRdtase_comp1"/>
</dbReference>
<dbReference type="InterPro" id="IPR042298">
    <property type="entry name" value="P-CP_red_C"/>
</dbReference>
<dbReference type="InterPro" id="IPR005969">
    <property type="entry name" value="Protochl_reductB"/>
</dbReference>
<dbReference type="InterPro" id="IPR016209">
    <property type="entry name" value="Protochlorophyllide_Rdtase"/>
</dbReference>
<dbReference type="NCBIfam" id="TIGR01278">
    <property type="entry name" value="DPOR_BchB"/>
    <property type="match status" value="1"/>
</dbReference>
<dbReference type="NCBIfam" id="NF002789">
    <property type="entry name" value="PRK02910.1-3"/>
    <property type="match status" value="1"/>
</dbReference>
<dbReference type="PANTHER" id="PTHR33712">
    <property type="entry name" value="LIGHT-INDEPENDENT PROTOCHLOROPHYLLIDE REDUCTASE SUBUNIT B"/>
    <property type="match status" value="1"/>
</dbReference>
<dbReference type="PANTHER" id="PTHR33712:SF7">
    <property type="entry name" value="LIGHT-INDEPENDENT PROTOCHLOROPHYLLIDE REDUCTASE SUBUNIT B"/>
    <property type="match status" value="1"/>
</dbReference>
<dbReference type="Pfam" id="PF00148">
    <property type="entry name" value="Oxidored_nitro"/>
    <property type="match status" value="1"/>
</dbReference>
<dbReference type="Pfam" id="PF08369">
    <property type="entry name" value="PCP_red"/>
    <property type="match status" value="1"/>
</dbReference>
<dbReference type="PIRSF" id="PIRSF000163">
    <property type="entry name" value="PCP_ChlB"/>
    <property type="match status" value="1"/>
</dbReference>
<dbReference type="SUPFAM" id="SSF53807">
    <property type="entry name" value="Helical backbone' metal receptor"/>
    <property type="match status" value="1"/>
</dbReference>
<gene>
    <name evidence="1" type="primary">bchB</name>
    <name type="ordered locus">Cvib_0282</name>
</gene>
<proteinExistence type="inferred from homology"/>